<accession>Q6GA86</accession>
<name>ISDB_STAAS</name>
<protein>
    <recommendedName>
        <fullName>Iron-regulated surface determinant protein B</fullName>
    </recommendedName>
    <alternativeName>
        <fullName>Fur-regulated protein B</fullName>
    </alternativeName>
    <alternativeName>
        <fullName>Staphylococcal iron-regulated protein H</fullName>
    </alternativeName>
    <alternativeName>
        <fullName>Staphylococcus aureus surface protein J</fullName>
    </alternativeName>
</protein>
<keyword id="KW-0134">Cell wall</keyword>
<keyword id="KW-0349">Heme</keyword>
<keyword id="KW-0408">Iron</keyword>
<keyword id="KW-0479">Metal-binding</keyword>
<keyword id="KW-0572">Peptidoglycan-anchor</keyword>
<keyword id="KW-0677">Repeat</keyword>
<keyword id="KW-0964">Secreted</keyword>
<keyword id="KW-0732">Signal</keyword>
<keyword id="KW-0843">Virulence</keyword>
<sequence>MNKQQKEFKSFYSIRKSSLGVASVAISTLLLLMSNGEAQAAAEETGGTNTEAQPKTEAVASPTTTSEKAPETKPVANAVSVSNKEVEAPTSETKEAKEVKEVKAPKETKEVKPAAKATNNTYPILNQELREAIKNPAIKDKDHSAPNSRPIDFEMKKKDGTQQFYHYASSVKPARVIFTDSKPEIELGLQSGQFWRKFEVYEGDKKLPIKLVSYDTVKDYAYIRFSVSNGTKAVKIVSSTHFNNKEEKYDYTLMEFAQPIYNSADKFKTEEDYKAEKLLAPYKKAKTLERQVYELNKIQDKLPEKLKAEYKKKLEDTKKALDEQVKSAITEFQKVQPTNEKMTDLQDTKYVVYESVENNESMMDTFVKHPIKTGMLNGKKYMVMETTNDDYWKDFMVEGQRVRTISKDAKNNTRTIIFPYVEGKTLYDAIVKVHVKTIDYDGQYHVRIVDKEAFTKANTDKSNKKEQQDNSAKKEATPATPSKPTPSPVEKESQKQDSQKDDNKQLPSVEKENDASSESGKDKTPATKPTKGEVESSSTTPTKVVSTTQNVAKPTTASSKTTKDVVQTSAGSSEAKDSAPLQKANIKNTNDGHTQSQNNKNTQENKAKSLPQTGEESNKDMTLPLMALLALSSIVAFVLPRKRKN</sequence>
<evidence type="ECO:0000250" key="1"/>
<evidence type="ECO:0000250" key="2">
    <source>
        <dbReference type="UniProtKB" id="A6QG30"/>
    </source>
</evidence>
<evidence type="ECO:0000250" key="3">
    <source>
        <dbReference type="UniProtKB" id="Q2FZF0"/>
    </source>
</evidence>
<evidence type="ECO:0000250" key="4">
    <source>
        <dbReference type="UniProtKB" id="Q7A656"/>
    </source>
</evidence>
<evidence type="ECO:0000255" key="5"/>
<evidence type="ECO:0000255" key="6">
    <source>
        <dbReference type="PROSITE-ProRule" id="PRU00337"/>
    </source>
</evidence>
<evidence type="ECO:0000255" key="7">
    <source>
        <dbReference type="PROSITE-ProRule" id="PRU00477"/>
    </source>
</evidence>
<evidence type="ECO:0000256" key="8">
    <source>
        <dbReference type="SAM" id="MobiDB-lite"/>
    </source>
</evidence>
<evidence type="ECO:0000305" key="9"/>
<proteinExistence type="inferred from homology"/>
<feature type="signal peptide" evidence="5">
    <location>
        <begin position="1"/>
        <end position="40"/>
    </location>
</feature>
<feature type="chain" id="PRO_0000292571" description="Iron-regulated surface determinant protein B">
    <location>
        <begin position="41"/>
        <end position="613"/>
    </location>
</feature>
<feature type="propeptide" id="PRO_0000292572" description="Removed by sortase" evidence="7">
    <location>
        <begin position="614"/>
        <end position="645"/>
    </location>
</feature>
<feature type="domain" description="NEAT 1" evidence="6">
    <location>
        <begin position="144"/>
        <end position="269"/>
    </location>
</feature>
<feature type="domain" description="NEAT 2" evidence="6">
    <location>
        <begin position="341"/>
        <end position="458"/>
    </location>
</feature>
<feature type="region of interest" description="Disordered" evidence="8">
    <location>
        <begin position="38"/>
        <end position="113"/>
    </location>
</feature>
<feature type="region of interest" description="Disordered" evidence="8">
    <location>
        <begin position="458"/>
        <end position="619"/>
    </location>
</feature>
<feature type="short sequence motif" description="YSIRK-G/S signaling motif" evidence="3">
    <location>
        <begin position="12"/>
        <end position="23"/>
    </location>
</feature>
<feature type="short sequence motif" description="LPXTG sorting signal" evidence="7">
    <location>
        <begin position="610"/>
        <end position="614"/>
    </location>
</feature>
<feature type="compositionally biased region" description="Low complexity" evidence="8">
    <location>
        <begin position="38"/>
        <end position="53"/>
    </location>
</feature>
<feature type="compositionally biased region" description="Basic and acidic residues" evidence="8">
    <location>
        <begin position="84"/>
        <end position="113"/>
    </location>
</feature>
<feature type="compositionally biased region" description="Basic and acidic residues" evidence="8">
    <location>
        <begin position="458"/>
        <end position="476"/>
    </location>
</feature>
<feature type="compositionally biased region" description="Basic and acidic residues" evidence="8">
    <location>
        <begin position="489"/>
        <end position="534"/>
    </location>
</feature>
<feature type="compositionally biased region" description="Low complexity" evidence="8">
    <location>
        <begin position="535"/>
        <end position="560"/>
    </location>
</feature>
<feature type="compositionally biased region" description="Polar residues" evidence="8">
    <location>
        <begin position="585"/>
        <end position="615"/>
    </location>
</feature>
<feature type="binding site" description="axial binding residue" evidence="4">
    <location>
        <position position="362"/>
    </location>
    <ligand>
        <name>heme</name>
        <dbReference type="ChEBI" id="CHEBI:30413"/>
    </ligand>
    <ligandPart>
        <name>Fe</name>
        <dbReference type="ChEBI" id="CHEBI:18248"/>
    </ligandPart>
</feature>
<feature type="binding site" description="axial binding residue" evidence="4">
    <location>
        <position position="440"/>
    </location>
    <ligand>
        <name>heme</name>
        <dbReference type="ChEBI" id="CHEBI:30413"/>
    </ligand>
    <ligandPart>
        <name>Fe</name>
        <dbReference type="ChEBI" id="CHEBI:18248"/>
    </ligandPart>
</feature>
<feature type="modified residue" description="Pentaglycyl murein peptidoglycan amidated threonine" evidence="7">
    <location>
        <position position="613"/>
    </location>
</feature>
<comment type="function">
    <text evidence="2">Cell wall-anchored surface receptor that extracts heme from oxidized metHb to enable growth on hemoglobin as a sole iron source. Rapidly extracts heme from hemoglobin and transfers it to IsdA or IsdC, which then relays it to the membrane transporter/IsdEF for internalization. Also promotes resistance to hydrogen peroxide and killing by neutrophils.</text>
</comment>
<comment type="subunit">
    <text evidence="2">Interacts with host HBA; this interaction allows heme extraction as iron source. Interacts with IsdA.</text>
</comment>
<comment type="subcellular location">
    <subcellularLocation>
        <location evidence="2">Secreted</location>
        <location evidence="2">Cell wall</location>
        <topology evidence="2">Peptidoglycan-anchor</topology>
    </subcellularLocation>
    <text evidence="2">Anchored to the cell wall by sortase A.</text>
</comment>
<comment type="induction">
    <text evidence="1">Repressed by fur in the presence of iron.</text>
</comment>
<comment type="similarity">
    <text evidence="9">Belongs to the IsdB family.</text>
</comment>
<gene>
    <name type="primary">isdB</name>
    <name type="synonym">frpB</name>
    <name type="synonym">sasJ</name>
    <name type="synonym">sirH</name>
    <name type="ordered locus">SAS1063</name>
</gene>
<dbReference type="EMBL" id="BX571857">
    <property type="protein sequence ID" value="CAG42837.1"/>
    <property type="molecule type" value="Genomic_DNA"/>
</dbReference>
<dbReference type="RefSeq" id="WP_001041585.1">
    <property type="nucleotide sequence ID" value="NC_002953.3"/>
</dbReference>
<dbReference type="SMR" id="Q6GA86"/>
<dbReference type="ABCD" id="Q6GA86">
    <property type="antibodies" value="3 sequenced antibodies"/>
</dbReference>
<dbReference type="KEGG" id="sas:SAS1063"/>
<dbReference type="HOGENOM" id="CLU_016167_0_0_9"/>
<dbReference type="PRO" id="PR:Q6GA86"/>
<dbReference type="GO" id="GO:0005576">
    <property type="term" value="C:extracellular region"/>
    <property type="evidence" value="ECO:0007669"/>
    <property type="project" value="UniProtKB-KW"/>
</dbReference>
<dbReference type="GO" id="GO:0015232">
    <property type="term" value="F:heme transmembrane transporter activity"/>
    <property type="evidence" value="ECO:0007669"/>
    <property type="project" value="InterPro"/>
</dbReference>
<dbReference type="GO" id="GO:0046872">
    <property type="term" value="F:metal ion binding"/>
    <property type="evidence" value="ECO:0007669"/>
    <property type="project" value="UniProtKB-KW"/>
</dbReference>
<dbReference type="CDD" id="cd06920">
    <property type="entry name" value="NEAT"/>
    <property type="match status" value="1"/>
</dbReference>
<dbReference type="Gene3D" id="1.20.58.1270">
    <property type="match status" value="1"/>
</dbReference>
<dbReference type="Gene3D" id="2.60.40.1850">
    <property type="match status" value="2"/>
</dbReference>
<dbReference type="InterPro" id="IPR019929">
    <property type="entry name" value="Iron-reg_IsdB"/>
</dbReference>
<dbReference type="InterPro" id="IPR048652">
    <property type="entry name" value="Isd_H_B_linker"/>
</dbReference>
<dbReference type="InterPro" id="IPR050436">
    <property type="entry name" value="IsdA"/>
</dbReference>
<dbReference type="InterPro" id="IPR019931">
    <property type="entry name" value="LPXTG_anchor"/>
</dbReference>
<dbReference type="InterPro" id="IPR006635">
    <property type="entry name" value="NEAT_dom"/>
</dbReference>
<dbReference type="InterPro" id="IPR037250">
    <property type="entry name" value="NEAT_dom_sf"/>
</dbReference>
<dbReference type="InterPro" id="IPR005877">
    <property type="entry name" value="YSIRK_signal_dom"/>
</dbReference>
<dbReference type="NCBIfam" id="TIGR03657">
    <property type="entry name" value="IsdB"/>
    <property type="match status" value="1"/>
</dbReference>
<dbReference type="NCBIfam" id="TIGR01167">
    <property type="entry name" value="LPXTG_anchor"/>
    <property type="match status" value="1"/>
</dbReference>
<dbReference type="NCBIfam" id="TIGR01168">
    <property type="entry name" value="YSIRK_signal"/>
    <property type="match status" value="1"/>
</dbReference>
<dbReference type="PANTHER" id="PTHR37824">
    <property type="entry name" value="IRON-REGULATED SURFACE DETERMINANT PROTEIN C"/>
    <property type="match status" value="1"/>
</dbReference>
<dbReference type="PANTHER" id="PTHR37824:SF1">
    <property type="entry name" value="IRON-REGULATED SURFACE DETERMINANT PROTEIN C"/>
    <property type="match status" value="1"/>
</dbReference>
<dbReference type="Pfam" id="PF00746">
    <property type="entry name" value="Gram_pos_anchor"/>
    <property type="match status" value="1"/>
</dbReference>
<dbReference type="Pfam" id="PF20861">
    <property type="entry name" value="Isd_H_B_linker"/>
    <property type="match status" value="1"/>
</dbReference>
<dbReference type="Pfam" id="PF05031">
    <property type="entry name" value="NEAT"/>
    <property type="match status" value="2"/>
</dbReference>
<dbReference type="Pfam" id="PF04650">
    <property type="entry name" value="YSIRK_signal"/>
    <property type="match status" value="1"/>
</dbReference>
<dbReference type="SMART" id="SM00725">
    <property type="entry name" value="NEAT"/>
    <property type="match status" value="2"/>
</dbReference>
<dbReference type="SUPFAM" id="SSF158911">
    <property type="entry name" value="NEAT domain-like"/>
    <property type="match status" value="2"/>
</dbReference>
<dbReference type="PROSITE" id="PS50847">
    <property type="entry name" value="GRAM_POS_ANCHORING"/>
    <property type="match status" value="1"/>
</dbReference>
<dbReference type="PROSITE" id="PS50978">
    <property type="entry name" value="NEAT"/>
    <property type="match status" value="2"/>
</dbReference>
<reference key="1">
    <citation type="journal article" date="2004" name="Proc. Natl. Acad. Sci. U.S.A.">
        <title>Complete genomes of two clinical Staphylococcus aureus strains: evidence for the rapid evolution of virulence and drug resistance.</title>
        <authorList>
            <person name="Holden M.T.G."/>
            <person name="Feil E.J."/>
            <person name="Lindsay J.A."/>
            <person name="Peacock S.J."/>
            <person name="Day N.P.J."/>
            <person name="Enright M.C."/>
            <person name="Foster T.J."/>
            <person name="Moore C.E."/>
            <person name="Hurst L."/>
            <person name="Atkin R."/>
            <person name="Barron A."/>
            <person name="Bason N."/>
            <person name="Bentley S.D."/>
            <person name="Chillingworth C."/>
            <person name="Chillingworth T."/>
            <person name="Churcher C."/>
            <person name="Clark L."/>
            <person name="Corton C."/>
            <person name="Cronin A."/>
            <person name="Doggett J."/>
            <person name="Dowd L."/>
            <person name="Feltwell T."/>
            <person name="Hance Z."/>
            <person name="Harris B."/>
            <person name="Hauser H."/>
            <person name="Holroyd S."/>
            <person name="Jagels K."/>
            <person name="James K.D."/>
            <person name="Lennard N."/>
            <person name="Line A."/>
            <person name="Mayes R."/>
            <person name="Moule S."/>
            <person name="Mungall K."/>
            <person name="Ormond D."/>
            <person name="Quail M.A."/>
            <person name="Rabbinowitsch E."/>
            <person name="Rutherford K.M."/>
            <person name="Sanders M."/>
            <person name="Sharp S."/>
            <person name="Simmonds M."/>
            <person name="Stevens K."/>
            <person name="Whitehead S."/>
            <person name="Barrell B.G."/>
            <person name="Spratt B.G."/>
            <person name="Parkhill J."/>
        </authorList>
    </citation>
    <scope>NUCLEOTIDE SEQUENCE [LARGE SCALE GENOMIC DNA]</scope>
    <source>
        <strain>MSSA476</strain>
    </source>
</reference>
<organism>
    <name type="scientific">Staphylococcus aureus (strain MSSA476)</name>
    <dbReference type="NCBI Taxonomy" id="282459"/>
    <lineage>
        <taxon>Bacteria</taxon>
        <taxon>Bacillati</taxon>
        <taxon>Bacillota</taxon>
        <taxon>Bacilli</taxon>
        <taxon>Bacillales</taxon>
        <taxon>Staphylococcaceae</taxon>
        <taxon>Staphylococcus</taxon>
    </lineage>
</organism>